<keyword id="KW-0963">Cytoplasm</keyword>
<keyword id="KW-0671">Queuosine biosynthesis</keyword>
<keyword id="KW-0949">S-adenosyl-L-methionine</keyword>
<keyword id="KW-0808">Transferase</keyword>
<sequence length="361" mass="40170">MLVSDFHFDLPDELIARYPTEERTASRLLHLNGETGHFEDKQFFDLLDQINEGDLLIFNNTRVIPARLYGRKASGGKLEVLVERVLDEHRCLAHVRASKAPKEGAELVLGEDKLGEGNGFKAIMTARHDALFELHFNEEQPVFDLLQQAGHMPLPPYIDRPDEDADQERYQTVYSKVLGAVAAPTAGLHFDNPTLEKLKAKGVNIAFVTLHVGAGTFQPVRVDNILDHKMHAEYAEVSQAVVDQILATKATGKRVIAVGTTSVRSIESAAQAAEKEGKLIAPFFSDTSIFLYPGKTFRVVDALVTNFHLPESTLIMLVSAFAGYRNTMKAYQHAVEAKYRFFSYGDAMFINKNPNALNDLP</sequence>
<proteinExistence type="inferred from homology"/>
<gene>
    <name evidence="1" type="primary">queA</name>
    <name type="ordered locus">APJL_0767</name>
</gene>
<reference key="1">
    <citation type="journal article" date="2008" name="PLoS ONE">
        <title>Genome biology of Actinobacillus pleuropneumoniae JL03, an isolate of serotype 3 prevalent in China.</title>
        <authorList>
            <person name="Xu Z."/>
            <person name="Zhou Y."/>
            <person name="Li L."/>
            <person name="Zhou R."/>
            <person name="Xiao S."/>
            <person name="Wan Y."/>
            <person name="Zhang S."/>
            <person name="Wang K."/>
            <person name="Li W."/>
            <person name="Li L."/>
            <person name="Jin H."/>
            <person name="Kang M."/>
            <person name="Dalai B."/>
            <person name="Li T."/>
            <person name="Liu L."/>
            <person name="Cheng Y."/>
            <person name="Zhang L."/>
            <person name="Xu T."/>
            <person name="Zheng H."/>
            <person name="Pu S."/>
            <person name="Wang B."/>
            <person name="Gu W."/>
            <person name="Zhang X.L."/>
            <person name="Zhu G.-F."/>
            <person name="Wang S."/>
            <person name="Zhao G.-P."/>
            <person name="Chen H."/>
        </authorList>
    </citation>
    <scope>NUCLEOTIDE SEQUENCE [LARGE SCALE GENOMIC DNA]</scope>
    <source>
        <strain>JL03</strain>
    </source>
</reference>
<evidence type="ECO:0000255" key="1">
    <source>
        <dbReference type="HAMAP-Rule" id="MF_00113"/>
    </source>
</evidence>
<comment type="function">
    <text evidence="1">Transfers and isomerizes the ribose moiety from AdoMet to the 7-aminomethyl group of 7-deazaguanine (preQ1-tRNA) to give epoxyqueuosine (oQ-tRNA).</text>
</comment>
<comment type="catalytic activity">
    <reaction evidence="1">
        <text>7-aminomethyl-7-carbaguanosine(34) in tRNA + S-adenosyl-L-methionine = epoxyqueuosine(34) in tRNA + adenine + L-methionine + 2 H(+)</text>
        <dbReference type="Rhea" id="RHEA:32155"/>
        <dbReference type="Rhea" id="RHEA-COMP:10342"/>
        <dbReference type="Rhea" id="RHEA-COMP:18582"/>
        <dbReference type="ChEBI" id="CHEBI:15378"/>
        <dbReference type="ChEBI" id="CHEBI:16708"/>
        <dbReference type="ChEBI" id="CHEBI:57844"/>
        <dbReference type="ChEBI" id="CHEBI:59789"/>
        <dbReference type="ChEBI" id="CHEBI:82833"/>
        <dbReference type="ChEBI" id="CHEBI:194443"/>
        <dbReference type="EC" id="2.4.99.17"/>
    </reaction>
</comment>
<comment type="pathway">
    <text evidence="1">tRNA modification; tRNA-queuosine biosynthesis.</text>
</comment>
<comment type="subunit">
    <text evidence="1">Monomer.</text>
</comment>
<comment type="subcellular location">
    <subcellularLocation>
        <location evidence="1">Cytoplasm</location>
    </subcellularLocation>
</comment>
<comment type="similarity">
    <text evidence="1">Belongs to the QueA family.</text>
</comment>
<feature type="chain" id="PRO_1000094747" description="S-adenosylmethionine:tRNA ribosyltransferase-isomerase">
    <location>
        <begin position="1"/>
        <end position="361"/>
    </location>
</feature>
<protein>
    <recommendedName>
        <fullName evidence="1">S-adenosylmethionine:tRNA ribosyltransferase-isomerase</fullName>
        <ecNumber evidence="1">2.4.99.17</ecNumber>
    </recommendedName>
    <alternativeName>
        <fullName evidence="1">Queuosine biosynthesis protein QueA</fullName>
    </alternativeName>
</protein>
<organism>
    <name type="scientific">Actinobacillus pleuropneumoniae serotype 3 (strain JL03)</name>
    <dbReference type="NCBI Taxonomy" id="434271"/>
    <lineage>
        <taxon>Bacteria</taxon>
        <taxon>Pseudomonadati</taxon>
        <taxon>Pseudomonadota</taxon>
        <taxon>Gammaproteobacteria</taxon>
        <taxon>Pasteurellales</taxon>
        <taxon>Pasteurellaceae</taxon>
        <taxon>Actinobacillus</taxon>
    </lineage>
</organism>
<accession>B0BP45</accession>
<name>QUEA_ACTPJ</name>
<dbReference type="EC" id="2.4.99.17" evidence="1"/>
<dbReference type="EMBL" id="CP000687">
    <property type="protein sequence ID" value="ABY69330.1"/>
    <property type="molecule type" value="Genomic_DNA"/>
</dbReference>
<dbReference type="RefSeq" id="WP_012262952.1">
    <property type="nucleotide sequence ID" value="NC_010278.1"/>
</dbReference>
<dbReference type="SMR" id="B0BP45"/>
<dbReference type="KEGG" id="apj:APJL_0767"/>
<dbReference type="HOGENOM" id="CLU_039110_1_0_6"/>
<dbReference type="UniPathway" id="UPA00392"/>
<dbReference type="Proteomes" id="UP000008547">
    <property type="component" value="Chromosome"/>
</dbReference>
<dbReference type="GO" id="GO:0005737">
    <property type="term" value="C:cytoplasm"/>
    <property type="evidence" value="ECO:0007669"/>
    <property type="project" value="UniProtKB-SubCell"/>
</dbReference>
<dbReference type="GO" id="GO:0051075">
    <property type="term" value="F:S-adenosylmethionine:tRNA ribosyltransferase-isomerase activity"/>
    <property type="evidence" value="ECO:0007669"/>
    <property type="project" value="UniProtKB-EC"/>
</dbReference>
<dbReference type="GO" id="GO:0008616">
    <property type="term" value="P:queuosine biosynthetic process"/>
    <property type="evidence" value="ECO:0007669"/>
    <property type="project" value="UniProtKB-UniRule"/>
</dbReference>
<dbReference type="GO" id="GO:0002099">
    <property type="term" value="P:tRNA wobble guanine modification"/>
    <property type="evidence" value="ECO:0007669"/>
    <property type="project" value="TreeGrafter"/>
</dbReference>
<dbReference type="FunFam" id="2.40.10.240:FF:000001">
    <property type="entry name" value="S-adenosylmethionine:tRNA ribosyltransferase-isomerase"/>
    <property type="match status" value="1"/>
</dbReference>
<dbReference type="FunFam" id="3.40.1780.10:FF:000001">
    <property type="entry name" value="S-adenosylmethionine:tRNA ribosyltransferase-isomerase"/>
    <property type="match status" value="1"/>
</dbReference>
<dbReference type="Gene3D" id="2.40.10.240">
    <property type="entry name" value="QueA-like"/>
    <property type="match status" value="1"/>
</dbReference>
<dbReference type="Gene3D" id="3.40.1780.10">
    <property type="entry name" value="QueA-like"/>
    <property type="match status" value="1"/>
</dbReference>
<dbReference type="HAMAP" id="MF_00113">
    <property type="entry name" value="QueA"/>
    <property type="match status" value="1"/>
</dbReference>
<dbReference type="InterPro" id="IPR003699">
    <property type="entry name" value="QueA"/>
</dbReference>
<dbReference type="InterPro" id="IPR042118">
    <property type="entry name" value="QueA_dom1"/>
</dbReference>
<dbReference type="InterPro" id="IPR042119">
    <property type="entry name" value="QueA_dom2"/>
</dbReference>
<dbReference type="InterPro" id="IPR036100">
    <property type="entry name" value="QueA_sf"/>
</dbReference>
<dbReference type="NCBIfam" id="NF001140">
    <property type="entry name" value="PRK00147.1"/>
    <property type="match status" value="1"/>
</dbReference>
<dbReference type="NCBIfam" id="TIGR00113">
    <property type="entry name" value="queA"/>
    <property type="match status" value="1"/>
</dbReference>
<dbReference type="PANTHER" id="PTHR30307">
    <property type="entry name" value="S-ADENOSYLMETHIONINE:TRNA RIBOSYLTRANSFERASE-ISOMERASE"/>
    <property type="match status" value="1"/>
</dbReference>
<dbReference type="PANTHER" id="PTHR30307:SF0">
    <property type="entry name" value="S-ADENOSYLMETHIONINE:TRNA RIBOSYLTRANSFERASE-ISOMERASE"/>
    <property type="match status" value="1"/>
</dbReference>
<dbReference type="Pfam" id="PF02547">
    <property type="entry name" value="Queuosine_synth"/>
    <property type="match status" value="1"/>
</dbReference>
<dbReference type="SUPFAM" id="SSF111337">
    <property type="entry name" value="QueA-like"/>
    <property type="match status" value="1"/>
</dbReference>